<name>UPAR_BOVIN</name>
<feature type="signal peptide" evidence="3">
    <location>
        <begin position="1"/>
        <end position="20"/>
    </location>
</feature>
<feature type="chain" id="PRO_0000036086" description="Urokinase plasminogen activator surface receptor">
    <location>
        <begin position="21"/>
        <end position="300" status="uncertain"/>
    </location>
</feature>
<feature type="propeptide" id="PRO_0000036087" description="Removed in mature form" evidence="3">
    <location>
        <begin position="301" status="uncertain"/>
        <end position="330"/>
    </location>
</feature>
<feature type="domain" description="UPAR/Ly6 1">
    <location>
        <begin position="21"/>
        <end position="112"/>
    </location>
</feature>
<feature type="domain" description="UPAR/Ly6 2">
    <location>
        <begin position="113"/>
        <end position="208"/>
    </location>
</feature>
<feature type="domain" description="UPAR/Ly6 3">
    <location>
        <begin position="209"/>
        <end position="300"/>
    </location>
</feature>
<feature type="lipid moiety-binding region" description="GPI-anchor amidated glycine" evidence="3">
    <location>
        <position position="300"/>
    </location>
</feature>
<feature type="glycosylation site" description="N-linked (GlcNAc...) asparagine" evidence="3">
    <location>
        <position position="28"/>
    </location>
</feature>
<feature type="glycosylation site" description="N-linked (GlcNAc...) asparagine" evidence="3">
    <location>
        <position position="72"/>
    </location>
</feature>
<feature type="glycosylation site" description="N-linked (GlcNAc...) asparagine" evidence="3">
    <location>
        <position position="179"/>
    </location>
</feature>
<feature type="glycosylation site" description="N-linked (GlcNAc...) asparagine" evidence="3">
    <location>
        <position position="189"/>
    </location>
</feature>
<feature type="glycosylation site" description="N-linked (GlcNAc...) asparagine" evidence="3">
    <location>
        <position position="279"/>
    </location>
</feature>
<feature type="disulfide bond" evidence="2">
    <location>
        <begin position="23"/>
        <end position="44"/>
    </location>
</feature>
<feature type="disulfide bond" evidence="2">
    <location>
        <begin position="26"/>
        <end position="32"/>
    </location>
</feature>
<feature type="disulfide bond" evidence="2">
    <location>
        <begin position="37"/>
        <end position="65"/>
    </location>
</feature>
<feature type="disulfide bond" evidence="2">
    <location>
        <begin position="91"/>
        <end position="96"/>
    </location>
</feature>
<feature type="disulfide bond" evidence="2">
    <location>
        <begin position="115"/>
        <end position="142"/>
    </location>
</feature>
<feature type="disulfide bond" evidence="2">
    <location>
        <begin position="118"/>
        <end position="125"/>
    </location>
</feature>
<feature type="disulfide bond" evidence="2">
    <location>
        <begin position="135"/>
        <end position="164"/>
    </location>
</feature>
<feature type="disulfide bond" evidence="2">
    <location>
        <begin position="170"/>
        <end position="187"/>
    </location>
</feature>
<feature type="disulfide bond" evidence="2">
    <location>
        <begin position="188"/>
        <end position="193"/>
    </location>
</feature>
<feature type="disulfide bond" evidence="2">
    <location>
        <begin position="211"/>
        <end position="239"/>
    </location>
</feature>
<feature type="disulfide bond" evidence="2">
    <location>
        <begin position="214"/>
        <end position="222"/>
    </location>
</feature>
<feature type="disulfide bond" evidence="2">
    <location>
        <begin position="232"/>
        <end position="258"/>
    </location>
</feature>
<feature type="disulfide bond" evidence="2">
    <location>
        <begin position="264"/>
        <end position="282"/>
    </location>
</feature>
<feature type="disulfide bond" evidence="2">
    <location>
        <begin position="283"/>
        <end position="288"/>
    </location>
</feature>
<reference key="1">
    <citation type="journal article" date="1993" name="Gene">
        <title>Bovine urokinase-type plasminogen activator and its receptor: cloning and induction by retinoic acid.</title>
        <authorList>
            <person name="Kraetzschmar J."/>
            <person name="Haendler B."/>
            <person name="Kojima S."/>
            <person name="Rifkin D.B."/>
            <person name="Schleuning W.-D."/>
        </authorList>
    </citation>
    <scope>NUCLEOTIDE SEQUENCE [MRNA]</scope>
    <source>
        <tissue>Aortic endothelium</tissue>
    </source>
</reference>
<reference key="2">
    <citation type="journal article" date="1993" name="Thromb. Res.">
        <title>Molecular cloning of cDNA for the bovine urokinase-type plasminogen activator receptor.</title>
        <authorList>
            <person name="Reuning U."/>
            <person name="Little S.P."/>
            <person name="Dixon E.P."/>
            <person name="Johnstone E.M."/>
            <person name="Bang N.U."/>
        </authorList>
    </citation>
    <scope>NUCLEOTIDE SEQUENCE [MRNA]</scope>
    <source>
        <tissue>Aortic endothelium</tissue>
    </source>
</reference>
<reference key="3">
    <citation type="submission" date="2007-06" db="EMBL/GenBank/DDBJ databases">
        <authorList>
            <consortium name="NIH - Mammalian Gene Collection (MGC) project"/>
        </authorList>
    </citation>
    <scope>NUCLEOTIDE SEQUENCE [LARGE SCALE MRNA]</scope>
    <source>
        <strain>Hereford</strain>
        <tissue>Hypothalamus</tissue>
    </source>
</reference>
<keyword id="KW-1003">Cell membrane</keyword>
<keyword id="KW-1015">Disulfide bond</keyword>
<keyword id="KW-0325">Glycoprotein</keyword>
<keyword id="KW-0336">GPI-anchor</keyword>
<keyword id="KW-0449">Lipoprotein</keyword>
<keyword id="KW-0472">Membrane</keyword>
<keyword id="KW-0675">Receptor</keyword>
<keyword id="KW-1185">Reference proteome</keyword>
<keyword id="KW-0677">Repeat</keyword>
<keyword id="KW-0732">Signal</keyword>
<gene>
    <name type="primary">PLAUR</name>
</gene>
<proteinExistence type="evidence at transcript level"/>
<evidence type="ECO:0000250" key="1">
    <source>
        <dbReference type="UniProtKB" id="P49616"/>
    </source>
</evidence>
<evidence type="ECO:0000250" key="2">
    <source>
        <dbReference type="UniProtKB" id="Q03405"/>
    </source>
</evidence>
<evidence type="ECO:0000255" key="3"/>
<evidence type="ECO:0000305" key="4"/>
<sequence length="330" mass="35989">MGQPLLLLLLVYTYIPGSWGLRCLQCENTTSCSVEECTPGQDLCRTTVLSVWEGGNEMNVVRKGCTHPDKTNRSMSYRAADQIITLSETVCRSDLCNKPNPGRDATVSRNRYLECASCSSTDLSCERGWDQTMQCLKSRDQCVDVITHRSLKENPGDERHIRGCGILPGCPGPTGFHNNHTFHFLRCCNTTKCNAGSVLELQNLPPNGLQCYSCEGNGAHRCSSEETFLIDCRGPMNQCLEATGTKGLRNPSYTIRGCAAPSWCQSLHVAEAFDLTHVNVSCCTGSGCNHPARDDQPGKGGAPKTSPAHLSFFVSLLLTARLWGATLLCT</sequence>
<protein>
    <recommendedName>
        <fullName>Urokinase plasminogen activator surface receptor</fullName>
        <shortName>U-PAR</shortName>
        <shortName>uPAR</shortName>
    </recommendedName>
    <cdAntigenName>CD87</cdAntigenName>
</protein>
<comment type="function">
    <text>Acts as a receptor for urokinase plasminogen activator. Plays a role in localizing and promoting plasmin formation. Mediates the proteolysis-independent signal transduction activation effects of U-PA.</text>
</comment>
<comment type="subunit">
    <text evidence="2 4">Monomer (Probable). Interacts (via the UPAR/Ly6 domains) with SRPX2. Interacts with MRC2 (By similarity). Interacts with SORL1 (via N-terminal ectodomain); this interaction decreases PLAUR internalization (By similarity). The ternary complex composed of PLAUR-PLAU-SERPINE1 also interacts with SORL1 (By similarity). Interacts with CD82; this interaction prevents PLAUR from binding to its high affinity ligand PLAU (By similarity).</text>
</comment>
<comment type="subcellular location">
    <subcellularLocation>
        <location evidence="1">Cell membrane</location>
        <topology evidence="1">Lipid-anchor</topology>
        <topology evidence="1">GPI-anchor</topology>
    </subcellularLocation>
</comment>
<comment type="induction">
    <text>By retinoic acid.</text>
</comment>
<dbReference type="EMBL" id="L03545">
    <property type="protein sequence ID" value="AAA30802.1"/>
    <property type="molecule type" value="mRNA"/>
</dbReference>
<dbReference type="EMBL" id="S70635">
    <property type="protein sequence ID" value="AAB30120.1"/>
    <property type="molecule type" value="mRNA"/>
</dbReference>
<dbReference type="EMBL" id="BC134754">
    <property type="protein sequence ID" value="AAI34755.1"/>
    <property type="molecule type" value="mRNA"/>
</dbReference>
<dbReference type="EMBL" id="BC142002">
    <property type="protein sequence ID" value="AAI42003.1"/>
    <property type="molecule type" value="mRNA"/>
</dbReference>
<dbReference type="PIR" id="JN0561">
    <property type="entry name" value="JN0561"/>
</dbReference>
<dbReference type="RefSeq" id="NP_776848.1">
    <property type="nucleotide sequence ID" value="NM_174423.3"/>
</dbReference>
<dbReference type="SMR" id="Q05588"/>
<dbReference type="FunCoup" id="Q05588">
    <property type="interactions" value="260"/>
</dbReference>
<dbReference type="STRING" id="9913.ENSBTAP00000017446"/>
<dbReference type="GlyCosmos" id="Q05588">
    <property type="glycosylation" value="5 sites, No reported glycans"/>
</dbReference>
<dbReference type="GlyGen" id="Q05588">
    <property type="glycosylation" value="5 sites"/>
</dbReference>
<dbReference type="PaxDb" id="9913-ENSBTAP00000017446"/>
<dbReference type="Ensembl" id="ENSBTAT00000017446.6">
    <property type="protein sequence ID" value="ENSBTAP00000017446.4"/>
    <property type="gene ID" value="ENSBTAG00000013125.6"/>
</dbReference>
<dbReference type="GeneID" id="281983"/>
<dbReference type="KEGG" id="bta:281983"/>
<dbReference type="CTD" id="5329"/>
<dbReference type="VEuPathDB" id="HostDB:ENSBTAG00000013125"/>
<dbReference type="VGNC" id="VGNC:32976">
    <property type="gene designation" value="PLAUR"/>
</dbReference>
<dbReference type="eggNOG" id="ENOG502S36D">
    <property type="taxonomic scope" value="Eukaryota"/>
</dbReference>
<dbReference type="GeneTree" id="ENSGT00940000153599"/>
<dbReference type="HOGENOM" id="CLU_072612_0_0_1"/>
<dbReference type="InParanoid" id="Q05588"/>
<dbReference type="OMA" id="TGNGCNH"/>
<dbReference type="OrthoDB" id="5945173at2759"/>
<dbReference type="TreeFam" id="TF338662"/>
<dbReference type="Reactome" id="R-BTA-162791">
    <property type="pathway name" value="Attachment of GPI anchor to uPAR"/>
</dbReference>
<dbReference type="Reactome" id="R-BTA-6798695">
    <property type="pathway name" value="Neutrophil degranulation"/>
</dbReference>
<dbReference type="Reactome" id="R-BTA-75205">
    <property type="pathway name" value="Dissolution of Fibrin Clot"/>
</dbReference>
<dbReference type="Proteomes" id="UP000009136">
    <property type="component" value="Chromosome 18"/>
</dbReference>
<dbReference type="Bgee" id="ENSBTAG00000013125">
    <property type="expression patterns" value="Expressed in milk and 98 other cell types or tissues"/>
</dbReference>
<dbReference type="GO" id="GO:0045177">
    <property type="term" value="C:apical part of cell"/>
    <property type="evidence" value="ECO:0000314"/>
    <property type="project" value="AgBase"/>
</dbReference>
<dbReference type="GO" id="GO:0009986">
    <property type="term" value="C:cell surface"/>
    <property type="evidence" value="ECO:0007669"/>
    <property type="project" value="Ensembl"/>
</dbReference>
<dbReference type="GO" id="GO:0005886">
    <property type="term" value="C:plasma membrane"/>
    <property type="evidence" value="ECO:0000318"/>
    <property type="project" value="GO_Central"/>
</dbReference>
<dbReference type="GO" id="GO:0098637">
    <property type="term" value="C:protein complex involved in cell-matrix adhesion"/>
    <property type="evidence" value="ECO:0007669"/>
    <property type="project" value="Ensembl"/>
</dbReference>
<dbReference type="GO" id="GO:1905370">
    <property type="term" value="C:serine-type endopeptidase complex"/>
    <property type="evidence" value="ECO:0007669"/>
    <property type="project" value="Ensembl"/>
</dbReference>
<dbReference type="GO" id="GO:0098552">
    <property type="term" value="C:side of membrane"/>
    <property type="evidence" value="ECO:0007669"/>
    <property type="project" value="UniProtKB-KW"/>
</dbReference>
<dbReference type="GO" id="GO:0019904">
    <property type="term" value="F:protein domain specific binding"/>
    <property type="evidence" value="ECO:0007669"/>
    <property type="project" value="Ensembl"/>
</dbReference>
<dbReference type="GO" id="GO:0005102">
    <property type="term" value="F:signaling receptor binding"/>
    <property type="evidence" value="ECO:0007669"/>
    <property type="project" value="Ensembl"/>
</dbReference>
<dbReference type="GO" id="GO:0035375">
    <property type="term" value="F:zymogen binding"/>
    <property type="evidence" value="ECO:0000353"/>
    <property type="project" value="AgBase"/>
</dbReference>
<dbReference type="GO" id="GO:2001243">
    <property type="term" value="P:negative regulation of intrinsic apoptotic signaling pathway"/>
    <property type="evidence" value="ECO:0007669"/>
    <property type="project" value="Ensembl"/>
</dbReference>
<dbReference type="GO" id="GO:0045742">
    <property type="term" value="P:positive regulation of epidermal growth factor receptor signaling pathway"/>
    <property type="evidence" value="ECO:0007669"/>
    <property type="project" value="Ensembl"/>
</dbReference>
<dbReference type="GO" id="GO:0034112">
    <property type="term" value="P:positive regulation of homotypic cell-cell adhesion"/>
    <property type="evidence" value="ECO:0007669"/>
    <property type="project" value="Ensembl"/>
</dbReference>
<dbReference type="GO" id="GO:0090200">
    <property type="term" value="P:positive regulation of release of cytochrome c from mitochondria"/>
    <property type="evidence" value="ECO:0007669"/>
    <property type="project" value="Ensembl"/>
</dbReference>
<dbReference type="CDD" id="cd23556">
    <property type="entry name" value="TFP_LU_ECD_uPAR_rpt1"/>
    <property type="match status" value="1"/>
</dbReference>
<dbReference type="CDD" id="cd23557">
    <property type="entry name" value="TFP_LU_ECD_uPAR_rpt2"/>
    <property type="match status" value="1"/>
</dbReference>
<dbReference type="CDD" id="cd23558">
    <property type="entry name" value="TFP_LU_ECD_uPAR_rpt3"/>
    <property type="match status" value="1"/>
</dbReference>
<dbReference type="FunFam" id="2.10.60.10:FF:000013">
    <property type="entry name" value="Urokinase plasminogen activator surface receptor"/>
    <property type="match status" value="1"/>
</dbReference>
<dbReference type="FunFam" id="2.10.60.10:FF:000015">
    <property type="entry name" value="Urokinase plasminogen activator surface receptor"/>
    <property type="match status" value="1"/>
</dbReference>
<dbReference type="FunFam" id="2.10.60.10:FF:000019">
    <property type="entry name" value="Urokinase plasminogen activator surface receptor"/>
    <property type="match status" value="1"/>
</dbReference>
<dbReference type="Gene3D" id="2.10.60.10">
    <property type="entry name" value="CD59"/>
    <property type="match status" value="3"/>
</dbReference>
<dbReference type="InterPro" id="IPR018363">
    <property type="entry name" value="CD59_antigen_CS"/>
</dbReference>
<dbReference type="InterPro" id="IPR016054">
    <property type="entry name" value="LY6_UPA_recep-like"/>
</dbReference>
<dbReference type="InterPro" id="IPR045860">
    <property type="entry name" value="Snake_toxin-like_sf"/>
</dbReference>
<dbReference type="PANTHER" id="PTHR10624:SF6">
    <property type="entry name" value="UROKINASE PLASMINOGEN ACTIVATOR SURFACE RECEPTOR"/>
    <property type="match status" value="1"/>
</dbReference>
<dbReference type="PANTHER" id="PTHR10624">
    <property type="entry name" value="UROKINASE PLASMINOGEN ACTIVATOR SURFACE RECEPTOR-RELATED"/>
    <property type="match status" value="1"/>
</dbReference>
<dbReference type="Pfam" id="PF00021">
    <property type="entry name" value="UPAR_LY6"/>
    <property type="match status" value="3"/>
</dbReference>
<dbReference type="SMART" id="SM00134">
    <property type="entry name" value="LU"/>
    <property type="match status" value="3"/>
</dbReference>
<dbReference type="SUPFAM" id="SSF57302">
    <property type="entry name" value="Snake toxin-like"/>
    <property type="match status" value="3"/>
</dbReference>
<dbReference type="PROSITE" id="PS00983">
    <property type="entry name" value="LY6_UPAR"/>
    <property type="match status" value="3"/>
</dbReference>
<organism>
    <name type="scientific">Bos taurus</name>
    <name type="common">Bovine</name>
    <dbReference type="NCBI Taxonomy" id="9913"/>
    <lineage>
        <taxon>Eukaryota</taxon>
        <taxon>Metazoa</taxon>
        <taxon>Chordata</taxon>
        <taxon>Craniata</taxon>
        <taxon>Vertebrata</taxon>
        <taxon>Euteleostomi</taxon>
        <taxon>Mammalia</taxon>
        <taxon>Eutheria</taxon>
        <taxon>Laurasiatheria</taxon>
        <taxon>Artiodactyla</taxon>
        <taxon>Ruminantia</taxon>
        <taxon>Pecora</taxon>
        <taxon>Bovidae</taxon>
        <taxon>Bovinae</taxon>
        <taxon>Bos</taxon>
    </lineage>
</organism>
<accession>Q05588</accession>
<accession>A5PJ83</accession>